<feature type="signal peptide" evidence="1">
    <location>
        <begin position="1"/>
        <end position="41"/>
    </location>
</feature>
<feature type="chain" id="PRO_0000005611" description="M protein, serotype 2.1">
    <location>
        <begin position="42"/>
        <end position="377"/>
    </location>
</feature>
<feature type="propeptide" id="PRO_0000005612" description="Removed by sortase" evidence="2">
    <location>
        <begin position="378"/>
        <end position="407"/>
    </location>
</feature>
<feature type="repeat" description="C 1" evidence="3">
    <location>
        <begin position="151"/>
        <end position="185"/>
    </location>
</feature>
<feature type="repeat" description="C 2" evidence="3">
    <location>
        <begin position="186"/>
        <end position="220"/>
    </location>
</feature>
<feature type="repeat" description="C 3" evidence="3">
    <location>
        <begin position="221"/>
        <end position="255"/>
    </location>
</feature>
<feature type="repeat" description="C 4" evidence="3">
    <location>
        <begin position="256"/>
        <end position="290"/>
    </location>
</feature>
<feature type="repeat" description="D 1" evidence="4">
    <location>
        <begin position="323"/>
        <end position="328"/>
    </location>
</feature>
<feature type="repeat" description="D 2" evidence="4">
    <location>
        <begin position="329"/>
        <end position="334"/>
    </location>
</feature>
<feature type="repeat" description="D 3" evidence="4">
    <location>
        <begin position="337"/>
        <end position="342"/>
    </location>
</feature>
<feature type="repeat" description="D 4" evidence="4">
    <location>
        <begin position="344"/>
        <end position="349"/>
    </location>
</feature>
<feature type="region of interest" description="2 X 7 AA tandem repeats">
    <location>
        <begin position="81"/>
        <end position="94"/>
    </location>
</feature>
<feature type="region of interest" description="Disordered" evidence="5">
    <location>
        <begin position="83"/>
        <end position="289"/>
    </location>
</feature>
<feature type="region of interest" description="Disordered" evidence="5">
    <location>
        <begin position="344"/>
        <end position="382"/>
    </location>
</feature>
<feature type="short sequence motif" description="LPXTG sorting signal" evidence="2">
    <location>
        <begin position="374"/>
        <end position="378"/>
    </location>
</feature>
<feature type="compositionally biased region" description="Basic and acidic residues" evidence="5">
    <location>
        <begin position="83"/>
        <end position="144"/>
    </location>
</feature>
<feature type="compositionally biased region" description="Basic and acidic residues" evidence="5">
    <location>
        <begin position="152"/>
        <end position="229"/>
    </location>
</feature>
<feature type="compositionally biased region" description="Basic and acidic residues" evidence="5">
    <location>
        <begin position="237"/>
        <end position="264"/>
    </location>
</feature>
<feature type="compositionally biased region" description="Basic and acidic residues" evidence="5">
    <location>
        <begin position="272"/>
        <end position="288"/>
    </location>
</feature>
<feature type="compositionally biased region" description="Polar residues" evidence="5">
    <location>
        <begin position="360"/>
        <end position="380"/>
    </location>
</feature>
<feature type="modified residue" description="Pentaglycyl murein peptidoglycan amidated threonine" evidence="2">
    <location>
        <position position="377"/>
    </location>
</feature>
<feature type="helix" evidence="7">
    <location>
        <begin position="60"/>
        <end position="84"/>
    </location>
</feature>
<protein>
    <recommendedName>
        <fullName>M protein, serotype 2.1</fullName>
    </recommendedName>
</protein>
<accession>P50468</accession>
<proteinExistence type="evidence at protein level"/>
<reference key="1">
    <citation type="journal article" date="1992" name="Infect. Immun.">
        <title>Nucleotide sequences of two adjacent M or M-like protein genes of group A streptococci: different RNA transcript levels and identification of a unique immunoglobulin A-binding protein.</title>
        <authorList>
            <person name="Bessen D.E."/>
            <person name="Fischetti V.A."/>
        </authorList>
    </citation>
    <scope>NUCLEOTIDE SEQUENCE [GENOMIC DNA]</scope>
    <source>
        <strain>T2/44/RB4/119</strain>
    </source>
</reference>
<reference key="2">
    <citation type="journal article" date="1990" name="J. Exp. Med.">
        <title>Differentiation between two biologically distinct classes of group A streptococci by limited substitutions of amino acids within the shared region of M protein-like molecules.</title>
        <authorList>
            <person name="Bessen D.E."/>
            <person name="Fischetti V.A."/>
        </authorList>
    </citation>
    <scope>NUCLEOTIDE SEQUENCE [GENOMIC DNA] OF 138-305</scope>
    <source>
        <strain>T2/44/RB4</strain>
    </source>
</reference>
<name>M21_STRPY</name>
<organism>
    <name type="scientific">Streptococcus pyogenes</name>
    <dbReference type="NCBI Taxonomy" id="1314"/>
    <lineage>
        <taxon>Bacteria</taxon>
        <taxon>Bacillati</taxon>
        <taxon>Bacillota</taxon>
        <taxon>Bacilli</taxon>
        <taxon>Lactobacillales</taxon>
        <taxon>Streptococcaceae</taxon>
        <taxon>Streptococcus</taxon>
    </lineage>
</organism>
<dbReference type="EMBL" id="X61276">
    <property type="protein sequence ID" value="CAA43581.1"/>
    <property type="molecule type" value="Genomic_DNA"/>
</dbReference>
<dbReference type="EMBL" id="X56398">
    <property type="protein sequence ID" value="CAA39808.1"/>
    <property type="molecule type" value="Genomic_DNA"/>
</dbReference>
<dbReference type="PIR" id="PH0139">
    <property type="entry name" value="PH0139"/>
</dbReference>
<dbReference type="PIR" id="S23325">
    <property type="entry name" value="S23325"/>
</dbReference>
<dbReference type="PDB" id="5HYU">
    <property type="method" value="X-ray"/>
    <property type="resolution" value="2.56 A"/>
    <property type="chains" value="A=42-142"/>
</dbReference>
<dbReference type="PDB" id="5I0Q">
    <property type="method" value="X-ray"/>
    <property type="resolution" value="2.29 A"/>
    <property type="chains" value="A=42-141"/>
</dbReference>
<dbReference type="PDBsum" id="5HYU"/>
<dbReference type="PDBsum" id="5I0Q"/>
<dbReference type="SMR" id="P50468"/>
<dbReference type="GO" id="GO:0005576">
    <property type="term" value="C:extracellular region"/>
    <property type="evidence" value="ECO:0007669"/>
    <property type="project" value="UniProtKB-KW"/>
</dbReference>
<dbReference type="GO" id="GO:0006909">
    <property type="term" value="P:phagocytosis"/>
    <property type="evidence" value="ECO:0007669"/>
    <property type="project" value="UniProtKB-KW"/>
</dbReference>
<dbReference type="Gene3D" id="6.10.250.460">
    <property type="match status" value="4"/>
</dbReference>
<dbReference type="InterPro" id="IPR019931">
    <property type="entry name" value="LPXTG_anchor"/>
</dbReference>
<dbReference type="InterPro" id="IPR019950">
    <property type="entry name" value="M_anchor"/>
</dbReference>
<dbReference type="InterPro" id="IPR003345">
    <property type="entry name" value="M_repeat"/>
</dbReference>
<dbReference type="InterPro" id="IPR049896">
    <property type="entry name" value="SMCR"/>
</dbReference>
<dbReference type="InterPro" id="IPR049895">
    <property type="entry name" value="SMDRR"/>
</dbReference>
<dbReference type="InterPro" id="IPR005877">
    <property type="entry name" value="YSIRK_signal_dom"/>
</dbReference>
<dbReference type="NCBIfam" id="TIGR01167">
    <property type="entry name" value="LPXTG_anchor"/>
    <property type="match status" value="1"/>
</dbReference>
<dbReference type="NCBIfam" id="TIGR01168">
    <property type="entry name" value="YSIRK_signal"/>
    <property type="match status" value="1"/>
</dbReference>
<dbReference type="Pfam" id="PF00746">
    <property type="entry name" value="Gram_pos_anchor"/>
    <property type="match status" value="1"/>
</dbReference>
<dbReference type="Pfam" id="PF02370">
    <property type="entry name" value="M"/>
    <property type="match status" value="4"/>
</dbReference>
<dbReference type="Pfam" id="PF04650">
    <property type="entry name" value="YSIRK_signal"/>
    <property type="match status" value="1"/>
</dbReference>
<dbReference type="PRINTS" id="PR00015">
    <property type="entry name" value="GPOSANCHOR"/>
</dbReference>
<dbReference type="PROSITE" id="PS50847">
    <property type="entry name" value="GRAM_POS_ANCHORING"/>
    <property type="match status" value="1"/>
</dbReference>
<dbReference type="PROSITE" id="PS52028">
    <property type="entry name" value="SMCR"/>
    <property type="match status" value="4"/>
</dbReference>
<dbReference type="PROSITE" id="PS52030">
    <property type="entry name" value="SMDRR"/>
    <property type="match status" value="1"/>
</dbReference>
<gene>
    <name type="primary">emmL2.1</name>
</gene>
<keyword id="KW-0002">3D-structure</keyword>
<keyword id="KW-0134">Cell wall</keyword>
<keyword id="KW-0175">Coiled coil</keyword>
<keyword id="KW-0572">Peptidoglycan-anchor</keyword>
<keyword id="KW-0581">Phagocytosis</keyword>
<keyword id="KW-0677">Repeat</keyword>
<keyword id="KW-0964">Secreted</keyword>
<keyword id="KW-0732">Signal</keyword>
<keyword id="KW-0843">Virulence</keyword>
<comment type="function">
    <text>This protein is one of the different antigenic serotypes of protein M. Protein M is closely associated with virulence of the bacterium and can render the organism resistant to phagocytosis.</text>
</comment>
<comment type="subcellular location">
    <subcellularLocation>
        <location evidence="2">Secreted</location>
        <location evidence="2">Cell wall</location>
        <topology evidence="2">Peptidoglycan-anchor</topology>
    </subcellularLocation>
</comment>
<comment type="similarity">
    <text evidence="6">Belongs to the M protein family.</text>
</comment>
<evidence type="ECO:0000255" key="1"/>
<evidence type="ECO:0000255" key="2">
    <source>
        <dbReference type="PROSITE-ProRule" id="PRU00477"/>
    </source>
</evidence>
<evidence type="ECO:0000255" key="3">
    <source>
        <dbReference type="PROSITE-ProRule" id="PRU01372"/>
    </source>
</evidence>
<evidence type="ECO:0000255" key="4">
    <source>
        <dbReference type="PROSITE-ProRule" id="PRU01374"/>
    </source>
</evidence>
<evidence type="ECO:0000256" key="5">
    <source>
        <dbReference type="SAM" id="MobiDB-lite"/>
    </source>
</evidence>
<evidence type="ECO:0000305" key="6"/>
<evidence type="ECO:0007829" key="7">
    <source>
        <dbReference type="PDB" id="5I0Q"/>
    </source>
</evidence>
<sequence length="407" mass="46466">MARKDTNKQYSLRKLKTGTASVAVAVAVLGAGFANQTTVKANSKNPVPVKKEAKLSEAELHDKIKNLEEEKAELFEKLDKVEEEHKKVEEEHKKDHEKLEKKSEDVERHYLRQLDQEYKEQQERQKNLEELERQSQREVEKRYQEQLQKQQQLEKEKQISEASRKSLRRDLEASRAAKKDLEAEHQKLKEEKQISEASRKSLRRDLEASRAAKKDLEAEHQKLKEEKQISEASRQGLSRDLEASRAAKKDLEAEHQKLKEEKQISEASRQGLSRDLEASREAKKKVEADLAEANSKLQALEKLNKELEEGKKLSEKEKAELQAKLEAEAKALKEQLAKQAEELAKLKGNQTPNAKVAPQANRSRSAMTQQKRTLPSTGETANPFFTAAAATVMVSAGMLALKRKEEN</sequence>